<evidence type="ECO:0000250" key="1"/>
<evidence type="ECO:0000255" key="2">
    <source>
        <dbReference type="HAMAP-Rule" id="MF_01465"/>
    </source>
</evidence>
<proteinExistence type="inferred from homology"/>
<keyword id="KW-1003">Cell membrane</keyword>
<keyword id="KW-0472">Membrane</keyword>
<keyword id="KW-0653">Protein transport</keyword>
<keyword id="KW-1185">Reference proteome</keyword>
<keyword id="KW-0811">Translocation</keyword>
<keyword id="KW-0812">Transmembrane</keyword>
<keyword id="KW-1133">Transmembrane helix</keyword>
<keyword id="KW-0813">Transport</keyword>
<gene>
    <name evidence="2" type="primary">secY</name>
    <name type="ordered locus">SSO0695</name>
    <name type="ORF">C10_035</name>
</gene>
<comment type="function">
    <text evidence="2">The central subunit of the protein translocation channel SecYEG. Consists of two halves formed by TMs 1-5 and 6-10. These two domains form a lateral gate at the front which open onto the bilayer between TMs 2 and 7, and are clamped together by SecE at the back. The channel is closed by both a pore ring composed of hydrophobic SecY resides and a short helix (helix 2A) on the extracellular side of the membrane which forms a plug. The plug probably moves laterally to allow the channel to open. The ring and the pore may move independently.</text>
</comment>
<comment type="subunit">
    <text evidence="2">Component of the Sec protein translocase complex. Heterotrimer consisting of alpha (SecY), beta (SecG) and gamma (SecE) subunits. The heterotrimers can form oligomers, although 1 heterotrimer is thought to be able to translocate proteins. Interacts with the ribosome. May interact with SecDF, and other proteins may be involved.</text>
</comment>
<comment type="subcellular location">
    <subcellularLocation>
        <location evidence="2">Cell membrane</location>
        <topology evidence="2">Multi-pass membrane protein</topology>
    </subcellularLocation>
</comment>
<comment type="similarity">
    <text evidence="2">Belongs to the SecY/SEC61-alpha family.</text>
</comment>
<feature type="chain" id="PRO_0000131771" description="Protein translocase subunit SecY">
    <location>
        <begin position="1"/>
        <end position="469"/>
    </location>
</feature>
<feature type="topological domain" description="Cytoplasmic" evidence="1">
    <location>
        <begin position="1"/>
        <end position="20"/>
    </location>
</feature>
<feature type="transmembrane region" description="Helical; Name=Helix 1" evidence="2">
    <location>
        <begin position="21"/>
        <end position="47"/>
    </location>
</feature>
<feature type="topological domain" description="Extracellular" evidence="1">
    <location>
        <begin position="48"/>
        <end position="59"/>
    </location>
</feature>
<feature type="transmembrane region" description="Discontinuously helical; Name=Helix 2" evidence="1">
    <location>
        <begin position="60"/>
        <end position="88"/>
    </location>
</feature>
<feature type="intramembrane region" description="Helical; Name=Helix 2A" evidence="1">
    <location>
        <begin position="60"/>
        <end position="67"/>
    </location>
</feature>
<feature type="intramembrane region" evidence="1">
    <location>
        <begin position="68"/>
        <end position="79"/>
    </location>
</feature>
<feature type="intramembrane region" description="Helical; Name=Helix 2B" evidence="1">
    <location>
        <begin position="80"/>
        <end position="88"/>
    </location>
</feature>
<feature type="topological domain" description="Cytoplasmic" evidence="1">
    <location>
        <begin position="89"/>
        <end position="109"/>
    </location>
</feature>
<feature type="transmembrane region" description="Helical; Name=Helix 3" evidence="2">
    <location>
        <begin position="110"/>
        <end position="131"/>
    </location>
</feature>
<feature type="topological domain" description="Extracellular" evidence="1">
    <location>
        <begin position="132"/>
        <end position="146"/>
    </location>
</feature>
<feature type="transmembrane region" description="Helical; Name=Helix 4" evidence="2">
    <location>
        <begin position="147"/>
        <end position="171"/>
    </location>
</feature>
<feature type="topological domain" description="Cytoplasmic" evidence="1">
    <location>
        <begin position="172"/>
        <end position="178"/>
    </location>
</feature>
<feature type="transmembrane region" description="Helical; Name=Helix 5" evidence="2">
    <location>
        <begin position="179"/>
        <end position="197"/>
    </location>
</feature>
<feature type="topological domain" description="Extracellular" evidence="1">
    <location>
        <begin position="198"/>
        <end position="240"/>
    </location>
</feature>
<feature type="transmembrane region" description="Helical; Name=Helix 6" evidence="2">
    <location>
        <begin position="241"/>
        <end position="262"/>
    </location>
</feature>
<feature type="topological domain" description="Cytoplasmic" evidence="1">
    <location>
        <begin position="263"/>
        <end position="287"/>
    </location>
</feature>
<feature type="transmembrane region" description="Helical; Name=Helix 7" evidence="2">
    <location>
        <begin position="288"/>
        <end position="309"/>
    </location>
</feature>
<feature type="topological domain" description="Extracellular" evidence="1">
    <location>
        <begin position="310"/>
        <end position="347"/>
    </location>
</feature>
<feature type="transmembrane region" description="Helical; Name=Helix 8" evidence="2">
    <location>
        <begin position="348"/>
        <end position="367"/>
    </location>
</feature>
<feature type="topological domain" description="Cytoplasmic" evidence="1">
    <location>
        <begin position="368"/>
        <end position="410"/>
    </location>
</feature>
<feature type="transmembrane region" description="Helical; Name=Helix 9" evidence="2">
    <location>
        <begin position="411"/>
        <end position="429"/>
    </location>
</feature>
<feature type="topological domain" description="Extracellular" evidence="1">
    <location>
        <begin position="430"/>
        <end position="432"/>
    </location>
</feature>
<feature type="transmembrane region" description="Helical; Name=Helix 10" evidence="2">
    <location>
        <begin position="433"/>
        <end position="447"/>
    </location>
</feature>
<feature type="topological domain" description="Cytoplasmic" evidence="1">
    <location>
        <begin position="448"/>
        <end position="469"/>
    </location>
</feature>
<reference key="1">
    <citation type="journal article" date="2000" name="Genome">
        <title>Gene content and organization of a 281-kbp contig from the genome of the extremely thermophilic archaeon, Sulfolobus solfataricus P2.</title>
        <authorList>
            <person name="Charlebois R.L."/>
            <person name="Singh R.K."/>
            <person name="Chan-Weiher C.C.-Y."/>
            <person name="Allard G."/>
            <person name="Chow C."/>
            <person name="Confalonieri F."/>
            <person name="Curtis B."/>
            <person name="Duguet M."/>
            <person name="Erauso G."/>
            <person name="Faguy D."/>
            <person name="Gaasterland T."/>
            <person name="Garrett R.A."/>
            <person name="Gordon P."/>
            <person name="Jeffries A.C."/>
            <person name="Kozera C."/>
            <person name="Kushwaha N."/>
            <person name="Lafleur E."/>
            <person name="Medina N."/>
            <person name="Peng X."/>
            <person name="Penny S.L."/>
            <person name="She Q."/>
            <person name="St Jean A."/>
            <person name="van der Oost J."/>
            <person name="Young F."/>
            <person name="Zivanovic Y."/>
            <person name="Doolittle W.F."/>
            <person name="Ragan M.A."/>
            <person name="Sensen C.W."/>
        </authorList>
    </citation>
    <scope>NUCLEOTIDE SEQUENCE [LARGE SCALE GENOMIC DNA]</scope>
    <source>
        <strain>ATCC 35092 / DSM 1617 / JCM 11322 / P2</strain>
    </source>
</reference>
<reference key="2">
    <citation type="journal article" date="2001" name="Proc. Natl. Acad. Sci. U.S.A.">
        <title>The complete genome of the crenarchaeon Sulfolobus solfataricus P2.</title>
        <authorList>
            <person name="She Q."/>
            <person name="Singh R.K."/>
            <person name="Confalonieri F."/>
            <person name="Zivanovic Y."/>
            <person name="Allard G."/>
            <person name="Awayez M.J."/>
            <person name="Chan-Weiher C.C.-Y."/>
            <person name="Clausen I.G."/>
            <person name="Curtis B.A."/>
            <person name="De Moors A."/>
            <person name="Erauso G."/>
            <person name="Fletcher C."/>
            <person name="Gordon P.M.K."/>
            <person name="Heikamp-de Jong I."/>
            <person name="Jeffries A.C."/>
            <person name="Kozera C.J."/>
            <person name="Medina N."/>
            <person name="Peng X."/>
            <person name="Thi-Ngoc H.P."/>
            <person name="Redder P."/>
            <person name="Schenk M.E."/>
            <person name="Theriault C."/>
            <person name="Tolstrup N."/>
            <person name="Charlebois R.L."/>
            <person name="Doolittle W.F."/>
            <person name="Duguet M."/>
            <person name="Gaasterland T."/>
            <person name="Garrett R.A."/>
            <person name="Ragan M.A."/>
            <person name="Sensen C.W."/>
            <person name="Van der Oost J."/>
        </authorList>
    </citation>
    <scope>NUCLEOTIDE SEQUENCE [LARGE SCALE GENOMIC DNA]</scope>
    <source>
        <strain>ATCC 35092 / DSM 1617 / JCM 11322 / P2</strain>
    </source>
</reference>
<organism>
    <name type="scientific">Saccharolobus solfataricus (strain ATCC 35092 / DSM 1617 / JCM 11322 / P2)</name>
    <name type="common">Sulfolobus solfataricus</name>
    <dbReference type="NCBI Taxonomy" id="273057"/>
    <lineage>
        <taxon>Archaea</taxon>
        <taxon>Thermoproteota</taxon>
        <taxon>Thermoprotei</taxon>
        <taxon>Sulfolobales</taxon>
        <taxon>Sulfolobaceae</taxon>
        <taxon>Saccharolobus</taxon>
    </lineage>
</organism>
<name>SECY_SACS2</name>
<sequence length="469" mass="50493">MSFIDSLATLGQYLPAVTKPKEKPSLGQKLVWSLVAVIIYLIMASTPLYGITSASFFKNLILEQIIFASTTGTLAQLGIGPIITAGLIMQILAGSKLISIDLNDPDDRVKFTEAQKGLAFIFILVESALFGYVLARTSTTINASILFIAGIVIAQLIVATYLILLLDELIQKGWGLGSGVSLFILAGVMKIMFWDMFGIASVSSQNLPIGFFPALFTALASHSDVLNLIVNTSTKNLFQPDLVGLVTTIALIIITIYLTTMTIEIPVTSQKLRGIRRTIPLNFLYVSSIPVIFVAVLGSDIQLFASLASYVSPSASNILNTVSGVFFFPPPNSAIPHSIYAVVLDPLGALEYAVVFIVLSILFGILWVDVAGLDPATQAQQLVEAGIEIPGVRNNPKIIEGILARYIYPLAFFSSIIVGLIAVFATLLGAYGTGIGILLAVTIAIQYYSLLAYERSLEMYPLLKRLIGE</sequence>
<accession>Q9UX84</accession>
<protein>
    <recommendedName>
        <fullName evidence="2">Protein translocase subunit SecY</fullName>
    </recommendedName>
    <alternativeName>
        <fullName evidence="2">Protein transport protein SEC61 subunit alpha homolog</fullName>
    </alternativeName>
</protein>
<dbReference type="EMBL" id="Y18930">
    <property type="protein sequence ID" value="CAB57608.1"/>
    <property type="molecule type" value="Genomic_DNA"/>
</dbReference>
<dbReference type="EMBL" id="AE006641">
    <property type="protein sequence ID" value="AAK40996.1"/>
    <property type="molecule type" value="Genomic_DNA"/>
</dbReference>
<dbReference type="PIR" id="E90217">
    <property type="entry name" value="E90217"/>
</dbReference>
<dbReference type="RefSeq" id="WP_009991249.1">
    <property type="nucleotide sequence ID" value="NC_002754.1"/>
</dbReference>
<dbReference type="SMR" id="Q9UX84"/>
<dbReference type="FunCoup" id="Q9UX84">
    <property type="interactions" value="262"/>
</dbReference>
<dbReference type="STRING" id="273057.SSO0695"/>
<dbReference type="PaxDb" id="273057-SSO0695"/>
<dbReference type="EnsemblBacteria" id="AAK40996">
    <property type="protein sequence ID" value="AAK40996"/>
    <property type="gene ID" value="SSO0695"/>
</dbReference>
<dbReference type="GeneID" id="44129694"/>
<dbReference type="KEGG" id="sso:SSO0695"/>
<dbReference type="PATRIC" id="fig|273057.12.peg.695"/>
<dbReference type="eggNOG" id="arCOG04169">
    <property type="taxonomic scope" value="Archaea"/>
</dbReference>
<dbReference type="HOGENOM" id="CLU_031763_3_0_2"/>
<dbReference type="InParanoid" id="Q9UX84"/>
<dbReference type="PhylomeDB" id="Q9UX84"/>
<dbReference type="Proteomes" id="UP000001974">
    <property type="component" value="Chromosome"/>
</dbReference>
<dbReference type="GO" id="GO:0005886">
    <property type="term" value="C:plasma membrane"/>
    <property type="evidence" value="ECO:0007669"/>
    <property type="project" value="UniProtKB-SubCell"/>
</dbReference>
<dbReference type="GO" id="GO:0008320">
    <property type="term" value="F:protein transmembrane transporter activity"/>
    <property type="evidence" value="ECO:0000318"/>
    <property type="project" value="GO_Central"/>
</dbReference>
<dbReference type="GO" id="GO:0005048">
    <property type="term" value="F:signal sequence binding"/>
    <property type="evidence" value="ECO:0000318"/>
    <property type="project" value="GO_Central"/>
</dbReference>
<dbReference type="GO" id="GO:0006616">
    <property type="term" value="P:SRP-dependent cotranslational protein targeting to membrane, translocation"/>
    <property type="evidence" value="ECO:0000318"/>
    <property type="project" value="GO_Central"/>
</dbReference>
<dbReference type="Gene3D" id="1.10.3370.10">
    <property type="entry name" value="SecY subunit domain"/>
    <property type="match status" value="1"/>
</dbReference>
<dbReference type="HAMAP" id="MF_01465">
    <property type="entry name" value="SecY"/>
    <property type="match status" value="1"/>
</dbReference>
<dbReference type="InterPro" id="IPR026593">
    <property type="entry name" value="SecY"/>
</dbReference>
<dbReference type="InterPro" id="IPR002208">
    <property type="entry name" value="SecY/SEC61-alpha"/>
</dbReference>
<dbReference type="InterPro" id="IPR030659">
    <property type="entry name" value="SecY_CS"/>
</dbReference>
<dbReference type="InterPro" id="IPR023201">
    <property type="entry name" value="SecY_dom_sf"/>
</dbReference>
<dbReference type="InterPro" id="IPR019561">
    <property type="entry name" value="Translocon_Sec61/SecY_plug_dom"/>
</dbReference>
<dbReference type="NCBIfam" id="NF006341">
    <property type="entry name" value="PRK08568.1-5"/>
    <property type="match status" value="1"/>
</dbReference>
<dbReference type="PANTHER" id="PTHR10906">
    <property type="entry name" value="SECY/SEC61-ALPHA FAMILY MEMBER"/>
    <property type="match status" value="1"/>
</dbReference>
<dbReference type="Pfam" id="PF10559">
    <property type="entry name" value="Plug_translocon"/>
    <property type="match status" value="1"/>
</dbReference>
<dbReference type="Pfam" id="PF00344">
    <property type="entry name" value="SecY"/>
    <property type="match status" value="1"/>
</dbReference>
<dbReference type="PIRSF" id="PIRSF004557">
    <property type="entry name" value="SecY"/>
    <property type="match status" value="1"/>
</dbReference>
<dbReference type="SUPFAM" id="SSF103491">
    <property type="entry name" value="Preprotein translocase SecY subunit"/>
    <property type="match status" value="1"/>
</dbReference>
<dbReference type="PROSITE" id="PS00755">
    <property type="entry name" value="SECY_1"/>
    <property type="match status" value="1"/>
</dbReference>
<dbReference type="PROSITE" id="PS00756">
    <property type="entry name" value="SECY_2"/>
    <property type="match status" value="1"/>
</dbReference>